<sequence>MANTSSAKKATRKIARRTEVNKARRSRVRTFVRQVEEAIASGDATLAKEAFLAAQPELARAATKGVLHANTASRKVSRLAKRVKALSAPTA</sequence>
<keyword id="KW-0687">Ribonucleoprotein</keyword>
<keyword id="KW-0689">Ribosomal protein</keyword>
<keyword id="KW-0694">RNA-binding</keyword>
<keyword id="KW-0699">rRNA-binding</keyword>
<dbReference type="EMBL" id="CP000628">
    <property type="protein sequence ID" value="ACM25253.1"/>
    <property type="molecule type" value="Genomic_DNA"/>
</dbReference>
<dbReference type="RefSeq" id="WP_007702696.1">
    <property type="nucleotide sequence ID" value="NC_011985.1"/>
</dbReference>
<dbReference type="SMR" id="B9J7T1"/>
<dbReference type="STRING" id="311403.Arad_0600"/>
<dbReference type="GeneID" id="86850903"/>
<dbReference type="KEGG" id="ara:Arad_0600"/>
<dbReference type="eggNOG" id="COG0268">
    <property type="taxonomic scope" value="Bacteria"/>
</dbReference>
<dbReference type="HOGENOM" id="CLU_160655_3_0_5"/>
<dbReference type="Proteomes" id="UP000001600">
    <property type="component" value="Chromosome 1"/>
</dbReference>
<dbReference type="GO" id="GO:0005829">
    <property type="term" value="C:cytosol"/>
    <property type="evidence" value="ECO:0007669"/>
    <property type="project" value="TreeGrafter"/>
</dbReference>
<dbReference type="GO" id="GO:0015935">
    <property type="term" value="C:small ribosomal subunit"/>
    <property type="evidence" value="ECO:0007669"/>
    <property type="project" value="TreeGrafter"/>
</dbReference>
<dbReference type="GO" id="GO:0070181">
    <property type="term" value="F:small ribosomal subunit rRNA binding"/>
    <property type="evidence" value="ECO:0007669"/>
    <property type="project" value="TreeGrafter"/>
</dbReference>
<dbReference type="GO" id="GO:0003735">
    <property type="term" value="F:structural constituent of ribosome"/>
    <property type="evidence" value="ECO:0007669"/>
    <property type="project" value="InterPro"/>
</dbReference>
<dbReference type="GO" id="GO:0006412">
    <property type="term" value="P:translation"/>
    <property type="evidence" value="ECO:0007669"/>
    <property type="project" value="UniProtKB-UniRule"/>
</dbReference>
<dbReference type="FunFam" id="1.20.58.110:FF:000001">
    <property type="entry name" value="30S ribosomal protein S20"/>
    <property type="match status" value="1"/>
</dbReference>
<dbReference type="Gene3D" id="1.20.58.110">
    <property type="entry name" value="Ribosomal protein S20"/>
    <property type="match status" value="1"/>
</dbReference>
<dbReference type="HAMAP" id="MF_00500">
    <property type="entry name" value="Ribosomal_bS20"/>
    <property type="match status" value="1"/>
</dbReference>
<dbReference type="InterPro" id="IPR002583">
    <property type="entry name" value="Ribosomal_bS20"/>
</dbReference>
<dbReference type="InterPro" id="IPR036510">
    <property type="entry name" value="Ribosomal_bS20_sf"/>
</dbReference>
<dbReference type="NCBIfam" id="TIGR00029">
    <property type="entry name" value="S20"/>
    <property type="match status" value="1"/>
</dbReference>
<dbReference type="PANTHER" id="PTHR33398">
    <property type="entry name" value="30S RIBOSOMAL PROTEIN S20"/>
    <property type="match status" value="1"/>
</dbReference>
<dbReference type="PANTHER" id="PTHR33398:SF1">
    <property type="entry name" value="SMALL RIBOSOMAL SUBUNIT PROTEIN BS20C"/>
    <property type="match status" value="1"/>
</dbReference>
<dbReference type="Pfam" id="PF01649">
    <property type="entry name" value="Ribosomal_S20p"/>
    <property type="match status" value="1"/>
</dbReference>
<dbReference type="SUPFAM" id="SSF46992">
    <property type="entry name" value="Ribosomal protein S20"/>
    <property type="match status" value="1"/>
</dbReference>
<organism>
    <name type="scientific">Rhizobium rhizogenes (strain K84 / ATCC BAA-868)</name>
    <name type="common">Agrobacterium radiobacter</name>
    <dbReference type="NCBI Taxonomy" id="311403"/>
    <lineage>
        <taxon>Bacteria</taxon>
        <taxon>Pseudomonadati</taxon>
        <taxon>Pseudomonadota</taxon>
        <taxon>Alphaproteobacteria</taxon>
        <taxon>Hyphomicrobiales</taxon>
        <taxon>Rhizobiaceae</taxon>
        <taxon>Rhizobium/Agrobacterium group</taxon>
        <taxon>Rhizobium</taxon>
    </lineage>
</organism>
<accession>B9J7T1</accession>
<comment type="function">
    <text evidence="1">Binds directly to 16S ribosomal RNA.</text>
</comment>
<comment type="similarity">
    <text evidence="1">Belongs to the bacterial ribosomal protein bS20 family.</text>
</comment>
<feature type="chain" id="PRO_1000135765" description="Small ribosomal subunit protein bS20">
    <location>
        <begin position="1"/>
        <end position="91"/>
    </location>
</feature>
<feature type="region of interest" description="Disordered" evidence="2">
    <location>
        <begin position="1"/>
        <end position="23"/>
    </location>
</feature>
<reference key="1">
    <citation type="journal article" date="2009" name="J. Bacteriol.">
        <title>Genome sequences of three Agrobacterium biovars help elucidate the evolution of multichromosome genomes in bacteria.</title>
        <authorList>
            <person name="Slater S.C."/>
            <person name="Goldman B.S."/>
            <person name="Goodner B."/>
            <person name="Setubal J.C."/>
            <person name="Farrand S.K."/>
            <person name="Nester E.W."/>
            <person name="Burr T.J."/>
            <person name="Banta L."/>
            <person name="Dickerman A.W."/>
            <person name="Paulsen I."/>
            <person name="Otten L."/>
            <person name="Suen G."/>
            <person name="Welch R."/>
            <person name="Almeida N.F."/>
            <person name="Arnold F."/>
            <person name="Burton O.T."/>
            <person name="Du Z."/>
            <person name="Ewing A."/>
            <person name="Godsy E."/>
            <person name="Heisel S."/>
            <person name="Houmiel K.L."/>
            <person name="Jhaveri J."/>
            <person name="Lu J."/>
            <person name="Miller N.M."/>
            <person name="Norton S."/>
            <person name="Chen Q."/>
            <person name="Phoolcharoen W."/>
            <person name="Ohlin V."/>
            <person name="Ondrusek D."/>
            <person name="Pride N."/>
            <person name="Stricklin S.L."/>
            <person name="Sun J."/>
            <person name="Wheeler C."/>
            <person name="Wilson L."/>
            <person name="Zhu H."/>
            <person name="Wood D.W."/>
        </authorList>
    </citation>
    <scope>NUCLEOTIDE SEQUENCE [LARGE SCALE GENOMIC DNA]</scope>
    <source>
        <strain>K84 / ATCC BAA-868</strain>
    </source>
</reference>
<gene>
    <name evidence="1" type="primary">rpsT</name>
    <name type="ordered locus">Arad_0600</name>
</gene>
<protein>
    <recommendedName>
        <fullName evidence="1">Small ribosomal subunit protein bS20</fullName>
    </recommendedName>
    <alternativeName>
        <fullName evidence="3">30S ribosomal protein S20</fullName>
    </alternativeName>
</protein>
<name>RS20_RHIR8</name>
<evidence type="ECO:0000255" key="1">
    <source>
        <dbReference type="HAMAP-Rule" id="MF_00500"/>
    </source>
</evidence>
<evidence type="ECO:0000256" key="2">
    <source>
        <dbReference type="SAM" id="MobiDB-lite"/>
    </source>
</evidence>
<evidence type="ECO:0000305" key="3"/>
<proteinExistence type="inferred from homology"/>